<comment type="similarity">
    <text evidence="1">Belongs to the 14-3-3 family.</text>
</comment>
<keyword id="KW-1185">Reference proteome</keyword>
<proteinExistence type="evidence at transcript level"/>
<evidence type="ECO:0000305" key="1"/>
<organism>
    <name type="scientific">Schistosoma mansoni</name>
    <name type="common">Blood fluke</name>
    <dbReference type="NCBI Taxonomy" id="6183"/>
    <lineage>
        <taxon>Eukaryota</taxon>
        <taxon>Metazoa</taxon>
        <taxon>Spiralia</taxon>
        <taxon>Lophotrochozoa</taxon>
        <taxon>Platyhelminthes</taxon>
        <taxon>Trematoda</taxon>
        <taxon>Digenea</taxon>
        <taxon>Strigeidida</taxon>
        <taxon>Schistosomatoidea</taxon>
        <taxon>Schistosomatidae</taxon>
        <taxon>Schistosoma</taxon>
    </lineage>
</organism>
<name>14332_SCHMA</name>
<feature type="chain" id="PRO_0000058662" description="14-3-3 protein homolog 2">
    <location>
        <begin position="1" status="less than"/>
        <end position="214"/>
    </location>
</feature>
<feature type="non-terminal residue">
    <location>
        <position position="1"/>
    </location>
</feature>
<dbReference type="EMBL" id="L78441">
    <property type="protein sequence ID" value="AAB02100.1"/>
    <property type="molecule type" value="mRNA"/>
</dbReference>
<dbReference type="SMR" id="Q26537"/>
<dbReference type="FunCoup" id="Q26537">
    <property type="interactions" value="1421"/>
</dbReference>
<dbReference type="STRING" id="6183.Q26537"/>
<dbReference type="InParanoid" id="Q26537"/>
<dbReference type="Proteomes" id="UP000008854">
    <property type="component" value="Unassembled WGS sequence"/>
</dbReference>
<dbReference type="FunFam" id="1.20.190.20:FF:000001">
    <property type="entry name" value="14-3-3 gamma 1"/>
    <property type="match status" value="1"/>
</dbReference>
<dbReference type="Gene3D" id="1.20.190.20">
    <property type="entry name" value="14-3-3 domain"/>
    <property type="match status" value="1"/>
</dbReference>
<dbReference type="InterPro" id="IPR000308">
    <property type="entry name" value="14-3-3"/>
</dbReference>
<dbReference type="InterPro" id="IPR023409">
    <property type="entry name" value="14-3-3_CS"/>
</dbReference>
<dbReference type="InterPro" id="IPR036815">
    <property type="entry name" value="14-3-3_dom_sf"/>
</dbReference>
<dbReference type="InterPro" id="IPR023410">
    <property type="entry name" value="14-3-3_domain"/>
</dbReference>
<dbReference type="PANTHER" id="PTHR18860">
    <property type="entry name" value="14-3-3 PROTEIN"/>
    <property type="match status" value="1"/>
</dbReference>
<dbReference type="Pfam" id="PF00244">
    <property type="entry name" value="14-3-3"/>
    <property type="match status" value="1"/>
</dbReference>
<dbReference type="PIRSF" id="PIRSF000868">
    <property type="entry name" value="14-3-3"/>
    <property type="match status" value="1"/>
</dbReference>
<dbReference type="PRINTS" id="PR00305">
    <property type="entry name" value="1433ZETA"/>
</dbReference>
<dbReference type="SMART" id="SM00101">
    <property type="entry name" value="14_3_3"/>
    <property type="match status" value="1"/>
</dbReference>
<dbReference type="SUPFAM" id="SSF48445">
    <property type="entry name" value="14-3-3 protein"/>
    <property type="match status" value="1"/>
</dbReference>
<dbReference type="PROSITE" id="PS00796">
    <property type="entry name" value="1433_1"/>
    <property type="match status" value="1"/>
</dbReference>
<dbReference type="PROSITE" id="PS00797">
    <property type="entry name" value="1433_2"/>
    <property type="match status" value="1"/>
</dbReference>
<reference key="1">
    <citation type="submission" date="1996-06" db="EMBL/GenBank/DDBJ databases">
        <authorList>
            <person name="Lee K.W."/>
            <person name="Thakur A."/>
            <person name="Karim A.M."/>
            <person name="Loverde P.T."/>
        </authorList>
    </citation>
    <scope>NUCLEOTIDE SEQUENCE [MRNA]</scope>
    <source>
        <strain>NMRI</strain>
    </source>
</reference>
<sequence length="214" mass="24608">SNNELTNEERNLLSVAYKNVVGARRSSWRVISSIEQKTEGSERKQQMAKDYREKIEKELKDICHEVLTLLDKFLIPKATTAESKVFYLKMKGDYYRYLAEVATGDERQKVIEESQRAYNDAFDIAKNQMQPTHPIRLGLALNFSVFYYEILNAPDRACHLAKQAFDDAIAELDTLNEDSYKDSTLIMQLLRDNLTLWTSDTGGDDDANAPDEHQ</sequence>
<protein>
    <recommendedName>
        <fullName>14-3-3 protein homolog 2</fullName>
        <shortName>14-3-3-2</shortName>
    </recommendedName>
</protein>
<accession>Q26537</accession>